<organism>
    <name type="scientific">Xanthomonas oryzae pv. oryzae (strain KACC10331 / KXO85)</name>
    <dbReference type="NCBI Taxonomy" id="291331"/>
    <lineage>
        <taxon>Bacteria</taxon>
        <taxon>Pseudomonadati</taxon>
        <taxon>Pseudomonadota</taxon>
        <taxon>Gammaproteobacteria</taxon>
        <taxon>Lysobacterales</taxon>
        <taxon>Lysobacteraceae</taxon>
        <taxon>Xanthomonas</taxon>
    </lineage>
</organism>
<keyword id="KW-0067">ATP-binding</keyword>
<keyword id="KW-0963">Cytoplasm</keyword>
<keyword id="KW-0275">Fatty acid biosynthesis</keyword>
<keyword id="KW-0276">Fatty acid metabolism</keyword>
<keyword id="KW-0444">Lipid biosynthesis</keyword>
<keyword id="KW-0443">Lipid metabolism</keyword>
<keyword id="KW-0479">Metal-binding</keyword>
<keyword id="KW-0547">Nucleotide-binding</keyword>
<keyword id="KW-1185">Reference proteome</keyword>
<keyword id="KW-0808">Transferase</keyword>
<keyword id="KW-0862">Zinc</keyword>
<keyword id="KW-0863">Zinc-finger</keyword>
<accession>Q5GXR7</accession>
<gene>
    <name evidence="1" type="primary">accD</name>
    <name type="ordered locus">XOO3250</name>
</gene>
<sequence length="295" mass="32010">MSWLSKLMPSGIRTENTPAKKRSVPEGLWEKCSNCGSALYGPELEENLEVCPKCDHHMAIRARARLNSLFDPDTATTEIAAQLGPVDVLKFKDQKRYGERIKASQKASGEYDALIAMRGTLKGNPLVAAAFDFAFMGGSMGSVVGERFARAAEVALEVGCPFVCFSASGGARMQEGLFSLMQMAKTSAALGRLREAGLPYISVLTHPTTGGVSASFAMLGDINIAEPHALIGFAGPRVIEQTVRETLPEGFQRSEFLLDHGAIDQICDRREMRNRIAELTAMMMRQPHPQDADAA</sequence>
<evidence type="ECO:0000255" key="1">
    <source>
        <dbReference type="HAMAP-Rule" id="MF_01395"/>
    </source>
</evidence>
<evidence type="ECO:0000255" key="2">
    <source>
        <dbReference type="PROSITE-ProRule" id="PRU01136"/>
    </source>
</evidence>
<evidence type="ECO:0000256" key="3">
    <source>
        <dbReference type="SAM" id="MobiDB-lite"/>
    </source>
</evidence>
<protein>
    <recommendedName>
        <fullName evidence="1">Acetyl-coenzyme A carboxylase carboxyl transferase subunit beta</fullName>
        <shortName evidence="1">ACCase subunit beta</shortName>
        <shortName evidence="1">Acetyl-CoA carboxylase carboxyltransferase subunit beta</shortName>
        <ecNumber evidence="1">2.1.3.15</ecNumber>
    </recommendedName>
</protein>
<comment type="function">
    <text evidence="1">Component of the acetyl coenzyme A carboxylase (ACC) complex. Biotin carboxylase (BC) catalyzes the carboxylation of biotin on its carrier protein (BCCP) and then the CO(2) group is transferred by the transcarboxylase to acetyl-CoA to form malonyl-CoA.</text>
</comment>
<comment type="catalytic activity">
    <reaction evidence="1">
        <text>N(6)-carboxybiotinyl-L-lysyl-[protein] + acetyl-CoA = N(6)-biotinyl-L-lysyl-[protein] + malonyl-CoA</text>
        <dbReference type="Rhea" id="RHEA:54728"/>
        <dbReference type="Rhea" id="RHEA-COMP:10505"/>
        <dbReference type="Rhea" id="RHEA-COMP:10506"/>
        <dbReference type="ChEBI" id="CHEBI:57288"/>
        <dbReference type="ChEBI" id="CHEBI:57384"/>
        <dbReference type="ChEBI" id="CHEBI:83144"/>
        <dbReference type="ChEBI" id="CHEBI:83145"/>
        <dbReference type="EC" id="2.1.3.15"/>
    </reaction>
</comment>
<comment type="cofactor">
    <cofactor evidence="1">
        <name>Zn(2+)</name>
        <dbReference type="ChEBI" id="CHEBI:29105"/>
    </cofactor>
    <text evidence="1">Binds 1 zinc ion per subunit.</text>
</comment>
<comment type="pathway">
    <text evidence="1">Lipid metabolism; malonyl-CoA biosynthesis; malonyl-CoA from acetyl-CoA: step 1/1.</text>
</comment>
<comment type="subunit">
    <text evidence="1">Acetyl-CoA carboxylase is a heterohexamer composed of biotin carboxyl carrier protein (AccB), biotin carboxylase (AccC) and two subunits each of ACCase subunit alpha (AccA) and ACCase subunit beta (AccD).</text>
</comment>
<comment type="subcellular location">
    <subcellularLocation>
        <location evidence="1">Cytoplasm</location>
    </subcellularLocation>
</comment>
<comment type="similarity">
    <text evidence="1">Belongs to the AccD/PCCB family.</text>
</comment>
<reference key="1">
    <citation type="journal article" date="2005" name="Nucleic Acids Res.">
        <title>The genome sequence of Xanthomonas oryzae pathovar oryzae KACC10331, the bacterial blight pathogen of rice.</title>
        <authorList>
            <person name="Lee B.-M."/>
            <person name="Park Y.-J."/>
            <person name="Park D.-S."/>
            <person name="Kang H.-W."/>
            <person name="Kim J.-G."/>
            <person name="Song E.-S."/>
            <person name="Park I.-C."/>
            <person name="Yoon U.-H."/>
            <person name="Hahn J.-H."/>
            <person name="Koo B.-S."/>
            <person name="Lee G.-B."/>
            <person name="Kim H."/>
            <person name="Park H.-S."/>
            <person name="Yoon K.-O."/>
            <person name="Kim J.-H."/>
            <person name="Jung C.-H."/>
            <person name="Koh N.-H."/>
            <person name="Seo J.-S."/>
            <person name="Go S.-J."/>
        </authorList>
    </citation>
    <scope>NUCLEOTIDE SEQUENCE [LARGE SCALE GENOMIC DNA]</scope>
    <source>
        <strain>KACC10331 / KXO85</strain>
    </source>
</reference>
<name>ACCD_XANOR</name>
<feature type="chain" id="PRO_0000359100" description="Acetyl-coenzyme A carboxylase carboxyl transferase subunit beta">
    <location>
        <begin position="1"/>
        <end position="295"/>
    </location>
</feature>
<feature type="domain" description="CoA carboxyltransferase N-terminal" evidence="2">
    <location>
        <begin position="28"/>
        <end position="295"/>
    </location>
</feature>
<feature type="zinc finger region" description="C4-type" evidence="1">
    <location>
        <begin position="32"/>
        <end position="54"/>
    </location>
</feature>
<feature type="region of interest" description="Disordered" evidence="3">
    <location>
        <begin position="1"/>
        <end position="20"/>
    </location>
</feature>
<feature type="binding site" evidence="1">
    <location>
        <position position="32"/>
    </location>
    <ligand>
        <name>Zn(2+)</name>
        <dbReference type="ChEBI" id="CHEBI:29105"/>
    </ligand>
</feature>
<feature type="binding site" evidence="1">
    <location>
        <position position="35"/>
    </location>
    <ligand>
        <name>Zn(2+)</name>
        <dbReference type="ChEBI" id="CHEBI:29105"/>
    </ligand>
</feature>
<feature type="binding site" evidence="1">
    <location>
        <position position="51"/>
    </location>
    <ligand>
        <name>Zn(2+)</name>
        <dbReference type="ChEBI" id="CHEBI:29105"/>
    </ligand>
</feature>
<feature type="binding site" evidence="1">
    <location>
        <position position="54"/>
    </location>
    <ligand>
        <name>Zn(2+)</name>
        <dbReference type="ChEBI" id="CHEBI:29105"/>
    </ligand>
</feature>
<proteinExistence type="inferred from homology"/>
<dbReference type="EC" id="2.1.3.15" evidence="1"/>
<dbReference type="EMBL" id="AE013598">
    <property type="protein sequence ID" value="AAW76504.1"/>
    <property type="molecule type" value="Genomic_DNA"/>
</dbReference>
<dbReference type="SMR" id="Q5GXR7"/>
<dbReference type="STRING" id="291331.XOO3250"/>
<dbReference type="KEGG" id="xoo:XOO3250"/>
<dbReference type="HOGENOM" id="CLU_015486_1_0_6"/>
<dbReference type="UniPathway" id="UPA00655">
    <property type="reaction ID" value="UER00711"/>
</dbReference>
<dbReference type="Proteomes" id="UP000006735">
    <property type="component" value="Chromosome"/>
</dbReference>
<dbReference type="GO" id="GO:0009329">
    <property type="term" value="C:acetate CoA-transferase complex"/>
    <property type="evidence" value="ECO:0007669"/>
    <property type="project" value="TreeGrafter"/>
</dbReference>
<dbReference type="GO" id="GO:0003989">
    <property type="term" value="F:acetyl-CoA carboxylase activity"/>
    <property type="evidence" value="ECO:0007669"/>
    <property type="project" value="InterPro"/>
</dbReference>
<dbReference type="GO" id="GO:0005524">
    <property type="term" value="F:ATP binding"/>
    <property type="evidence" value="ECO:0007669"/>
    <property type="project" value="UniProtKB-KW"/>
</dbReference>
<dbReference type="GO" id="GO:0016743">
    <property type="term" value="F:carboxyl- or carbamoyltransferase activity"/>
    <property type="evidence" value="ECO:0007669"/>
    <property type="project" value="UniProtKB-UniRule"/>
</dbReference>
<dbReference type="GO" id="GO:0008270">
    <property type="term" value="F:zinc ion binding"/>
    <property type="evidence" value="ECO:0007669"/>
    <property type="project" value="UniProtKB-UniRule"/>
</dbReference>
<dbReference type="GO" id="GO:0006633">
    <property type="term" value="P:fatty acid biosynthetic process"/>
    <property type="evidence" value="ECO:0007669"/>
    <property type="project" value="UniProtKB-KW"/>
</dbReference>
<dbReference type="GO" id="GO:2001295">
    <property type="term" value="P:malonyl-CoA biosynthetic process"/>
    <property type="evidence" value="ECO:0007669"/>
    <property type="project" value="UniProtKB-UniRule"/>
</dbReference>
<dbReference type="Gene3D" id="3.90.226.10">
    <property type="entry name" value="2-enoyl-CoA Hydratase, Chain A, domain 1"/>
    <property type="match status" value="1"/>
</dbReference>
<dbReference type="HAMAP" id="MF_01395">
    <property type="entry name" value="AcetylCoA_CT_beta"/>
    <property type="match status" value="1"/>
</dbReference>
<dbReference type="InterPro" id="IPR034733">
    <property type="entry name" value="AcCoA_carboxyl_beta"/>
</dbReference>
<dbReference type="InterPro" id="IPR000438">
    <property type="entry name" value="Acetyl_CoA_COase_Trfase_b_su"/>
</dbReference>
<dbReference type="InterPro" id="IPR029045">
    <property type="entry name" value="ClpP/crotonase-like_dom_sf"/>
</dbReference>
<dbReference type="InterPro" id="IPR011762">
    <property type="entry name" value="COA_CT_N"/>
</dbReference>
<dbReference type="InterPro" id="IPR041010">
    <property type="entry name" value="Znf-ACC"/>
</dbReference>
<dbReference type="NCBIfam" id="TIGR00515">
    <property type="entry name" value="accD"/>
    <property type="match status" value="1"/>
</dbReference>
<dbReference type="PANTHER" id="PTHR42995">
    <property type="entry name" value="ACETYL-COENZYME A CARBOXYLASE CARBOXYL TRANSFERASE SUBUNIT BETA, CHLOROPLASTIC"/>
    <property type="match status" value="1"/>
</dbReference>
<dbReference type="PANTHER" id="PTHR42995:SF5">
    <property type="entry name" value="ACETYL-COENZYME A CARBOXYLASE CARBOXYL TRANSFERASE SUBUNIT BETA, CHLOROPLASTIC"/>
    <property type="match status" value="1"/>
</dbReference>
<dbReference type="Pfam" id="PF01039">
    <property type="entry name" value="Carboxyl_trans"/>
    <property type="match status" value="1"/>
</dbReference>
<dbReference type="Pfam" id="PF17848">
    <property type="entry name" value="Zn_ribbon_ACC"/>
    <property type="match status" value="1"/>
</dbReference>
<dbReference type="PRINTS" id="PR01070">
    <property type="entry name" value="ACCCTRFRASEB"/>
</dbReference>
<dbReference type="SUPFAM" id="SSF52096">
    <property type="entry name" value="ClpP/crotonase"/>
    <property type="match status" value="1"/>
</dbReference>
<dbReference type="PROSITE" id="PS50980">
    <property type="entry name" value="COA_CT_NTER"/>
    <property type="match status" value="1"/>
</dbReference>